<feature type="chain" id="PRO_0000248391" description="Ephexin-1">
    <location>
        <begin position="1"/>
        <end position="701"/>
    </location>
</feature>
<feature type="domain" description="DH" evidence="2">
    <location>
        <begin position="264"/>
        <end position="448"/>
    </location>
</feature>
<feature type="domain" description="PH" evidence="3">
    <location>
        <begin position="480"/>
        <end position="592"/>
    </location>
</feature>
<feature type="domain" description="SH3" evidence="4">
    <location>
        <begin position="603"/>
        <end position="664"/>
    </location>
</feature>
<feature type="region of interest" description="Regulatory region; modulates activity toward RHOA, RAC1 and CDC42" evidence="1">
    <location>
        <begin position="1"/>
        <end position="264"/>
    </location>
</feature>
<feature type="region of interest" description="Disordered" evidence="5">
    <location>
        <begin position="1"/>
        <end position="141"/>
    </location>
</feature>
<feature type="region of interest" description="Disordered" evidence="5">
    <location>
        <begin position="187"/>
        <end position="226"/>
    </location>
</feature>
<feature type="region of interest" description="Disordered" evidence="5">
    <location>
        <begin position="679"/>
        <end position="701"/>
    </location>
</feature>
<feature type="compositionally biased region" description="Basic and acidic residues" evidence="5">
    <location>
        <begin position="1"/>
        <end position="11"/>
    </location>
</feature>
<feature type="compositionally biased region" description="Basic and acidic residues" evidence="5">
    <location>
        <begin position="26"/>
        <end position="48"/>
    </location>
</feature>
<feature type="compositionally biased region" description="Polar residues" evidence="5">
    <location>
        <begin position="120"/>
        <end position="132"/>
    </location>
</feature>
<feature type="compositionally biased region" description="Acidic residues" evidence="5">
    <location>
        <begin position="206"/>
        <end position="218"/>
    </location>
</feature>
<feature type="compositionally biased region" description="Basic and acidic residues" evidence="5">
    <location>
        <begin position="679"/>
        <end position="690"/>
    </location>
</feature>
<feature type="compositionally biased region" description="Basic residues" evidence="5">
    <location>
        <begin position="691"/>
        <end position="701"/>
    </location>
</feature>
<feature type="modified residue" description="Phosphotyrosine" evidence="7">
    <location>
        <position position="172"/>
    </location>
</feature>
<evidence type="ECO:0000250" key="1"/>
<evidence type="ECO:0000255" key="2">
    <source>
        <dbReference type="PROSITE-ProRule" id="PRU00062"/>
    </source>
</evidence>
<evidence type="ECO:0000255" key="3">
    <source>
        <dbReference type="PROSITE-ProRule" id="PRU00145"/>
    </source>
</evidence>
<evidence type="ECO:0000255" key="4">
    <source>
        <dbReference type="PROSITE-ProRule" id="PRU00192"/>
    </source>
</evidence>
<evidence type="ECO:0000256" key="5">
    <source>
        <dbReference type="SAM" id="MobiDB-lite"/>
    </source>
</evidence>
<evidence type="ECO:0000269" key="6">
    <source>
    </source>
</evidence>
<evidence type="ECO:0000269" key="7">
    <source>
    </source>
</evidence>
<dbReference type="EMBL" id="AABR03069437">
    <property type="status" value="NOT_ANNOTATED_CDS"/>
    <property type="molecule type" value="Genomic_DNA"/>
</dbReference>
<dbReference type="EMBL" id="AABR03069439">
    <property type="status" value="NOT_ANNOTATED_CDS"/>
    <property type="molecule type" value="Genomic_DNA"/>
</dbReference>
<dbReference type="EMBL" id="AABR03069922">
    <property type="status" value="NOT_ANNOTATED_CDS"/>
    <property type="molecule type" value="Genomic_DNA"/>
</dbReference>
<dbReference type="EMBL" id="BC091122">
    <property type="protein sequence ID" value="AAH91122.1"/>
    <property type="molecule type" value="mRNA"/>
</dbReference>
<dbReference type="SMR" id="Q5BKC9"/>
<dbReference type="FunCoup" id="Q5BKC9">
    <property type="interactions" value="472"/>
</dbReference>
<dbReference type="STRING" id="10116.ENSRNOP00000022485"/>
<dbReference type="GlyGen" id="Q5BKC9">
    <property type="glycosylation" value="1 site"/>
</dbReference>
<dbReference type="iPTMnet" id="Q5BKC9"/>
<dbReference type="PhosphoSitePlus" id="Q5BKC9"/>
<dbReference type="PaxDb" id="10116-ENSRNOP00000022485"/>
<dbReference type="UCSC" id="RGD:1309055">
    <property type="organism name" value="rat"/>
</dbReference>
<dbReference type="AGR" id="RGD:1309055"/>
<dbReference type="RGD" id="1309055">
    <property type="gene designation" value="Ngef"/>
</dbReference>
<dbReference type="eggNOG" id="KOG3523">
    <property type="taxonomic scope" value="Eukaryota"/>
</dbReference>
<dbReference type="InParanoid" id="Q5BKC9"/>
<dbReference type="PhylomeDB" id="Q5BKC9"/>
<dbReference type="Reactome" id="R-RNO-193648">
    <property type="pathway name" value="NRAGE signals death through JNK"/>
</dbReference>
<dbReference type="Reactome" id="R-RNO-3928663">
    <property type="pathway name" value="EPHA-mediated growth cone collapse"/>
</dbReference>
<dbReference type="Reactome" id="R-RNO-416482">
    <property type="pathway name" value="G alpha (12/13) signalling events"/>
</dbReference>
<dbReference type="Reactome" id="R-RNO-8980692">
    <property type="pathway name" value="RHOA GTPase cycle"/>
</dbReference>
<dbReference type="Reactome" id="R-RNO-9013148">
    <property type="pathway name" value="CDC42 GTPase cycle"/>
</dbReference>
<dbReference type="Reactome" id="R-RNO-9013149">
    <property type="pathway name" value="RAC1 GTPase cycle"/>
</dbReference>
<dbReference type="PRO" id="PR:Q5BKC9"/>
<dbReference type="Proteomes" id="UP000002494">
    <property type="component" value="Unplaced"/>
</dbReference>
<dbReference type="GO" id="GO:0005737">
    <property type="term" value="C:cytoplasm"/>
    <property type="evidence" value="ECO:0007669"/>
    <property type="project" value="UniProtKB-SubCell"/>
</dbReference>
<dbReference type="GO" id="GO:0098978">
    <property type="term" value="C:glutamatergic synapse"/>
    <property type="evidence" value="ECO:0000266"/>
    <property type="project" value="RGD"/>
</dbReference>
<dbReference type="GO" id="GO:0030426">
    <property type="term" value="C:growth cone"/>
    <property type="evidence" value="ECO:0007669"/>
    <property type="project" value="UniProtKB-SubCell"/>
</dbReference>
<dbReference type="GO" id="GO:0016020">
    <property type="term" value="C:membrane"/>
    <property type="evidence" value="ECO:0007669"/>
    <property type="project" value="UniProtKB-SubCell"/>
</dbReference>
<dbReference type="GO" id="GO:0098794">
    <property type="term" value="C:postsynapse"/>
    <property type="evidence" value="ECO:0000314"/>
    <property type="project" value="SynGO"/>
</dbReference>
<dbReference type="GO" id="GO:0046875">
    <property type="term" value="F:ephrin receptor binding"/>
    <property type="evidence" value="ECO:0000266"/>
    <property type="project" value="RGD"/>
</dbReference>
<dbReference type="GO" id="GO:0005085">
    <property type="term" value="F:guanyl-nucleotide exchange factor activity"/>
    <property type="evidence" value="ECO:0000266"/>
    <property type="project" value="RGD"/>
</dbReference>
<dbReference type="GO" id="GO:0030154">
    <property type="term" value="P:cell differentiation"/>
    <property type="evidence" value="ECO:0007669"/>
    <property type="project" value="UniProtKB-KW"/>
</dbReference>
<dbReference type="GO" id="GO:0048013">
    <property type="term" value="P:ephrin receptor signaling pathway"/>
    <property type="evidence" value="ECO:0000250"/>
    <property type="project" value="UniProtKB"/>
</dbReference>
<dbReference type="GO" id="GO:0061002">
    <property type="term" value="P:negative regulation of dendritic spine morphogenesis"/>
    <property type="evidence" value="ECO:0000250"/>
    <property type="project" value="UniProtKB"/>
</dbReference>
<dbReference type="GO" id="GO:0007399">
    <property type="term" value="P:nervous system development"/>
    <property type="evidence" value="ECO:0007669"/>
    <property type="project" value="UniProtKB-KW"/>
</dbReference>
<dbReference type="GO" id="GO:0032956">
    <property type="term" value="P:regulation of actin cytoskeleton organization"/>
    <property type="evidence" value="ECO:0000318"/>
    <property type="project" value="GO_Central"/>
</dbReference>
<dbReference type="GO" id="GO:0043087">
    <property type="term" value="P:regulation of GTPase activity"/>
    <property type="evidence" value="ECO:0000250"/>
    <property type="project" value="UniProtKB"/>
</dbReference>
<dbReference type="GO" id="GO:1905806">
    <property type="term" value="P:regulation of synapse pruning"/>
    <property type="evidence" value="ECO:0000266"/>
    <property type="project" value="RGD"/>
</dbReference>
<dbReference type="CDD" id="cd01221">
    <property type="entry name" value="PH_ephexin"/>
    <property type="match status" value="1"/>
</dbReference>
<dbReference type="CDD" id="cd00160">
    <property type="entry name" value="RhoGEF"/>
    <property type="match status" value="1"/>
</dbReference>
<dbReference type="CDD" id="cd11939">
    <property type="entry name" value="SH3_ephexin1"/>
    <property type="match status" value="1"/>
</dbReference>
<dbReference type="FunFam" id="2.30.30.40:FF:000123">
    <property type="entry name" value="Ephexin-1 isoform X1"/>
    <property type="match status" value="1"/>
</dbReference>
<dbReference type="FunFam" id="2.30.29.30:FF:000127">
    <property type="entry name" value="Neuronal guanine nucleotide exchange factor"/>
    <property type="match status" value="1"/>
</dbReference>
<dbReference type="FunFam" id="1.20.900.10:FF:000007">
    <property type="entry name" value="rho guanine nucleotide exchange factor 19"/>
    <property type="match status" value="1"/>
</dbReference>
<dbReference type="Gene3D" id="1.20.900.10">
    <property type="entry name" value="Dbl homology (DH) domain"/>
    <property type="match status" value="1"/>
</dbReference>
<dbReference type="Gene3D" id="2.30.29.30">
    <property type="entry name" value="Pleckstrin-homology domain (PH domain)/Phosphotyrosine-binding domain (PTB)"/>
    <property type="match status" value="1"/>
</dbReference>
<dbReference type="Gene3D" id="2.30.30.40">
    <property type="entry name" value="SH3 Domains"/>
    <property type="match status" value="1"/>
</dbReference>
<dbReference type="InterPro" id="IPR035899">
    <property type="entry name" value="DBL_dom_sf"/>
</dbReference>
<dbReference type="InterPro" id="IPR000219">
    <property type="entry name" value="DH_dom"/>
</dbReference>
<dbReference type="InterPro" id="IPR035635">
    <property type="entry name" value="Ephexin-1_SH3"/>
</dbReference>
<dbReference type="InterPro" id="IPR047271">
    <property type="entry name" value="Ephexin-like"/>
</dbReference>
<dbReference type="InterPro" id="IPR011993">
    <property type="entry name" value="PH-like_dom_sf"/>
</dbReference>
<dbReference type="InterPro" id="IPR001849">
    <property type="entry name" value="PH_domain"/>
</dbReference>
<dbReference type="InterPro" id="IPR047270">
    <property type="entry name" value="PH_ephexin"/>
</dbReference>
<dbReference type="InterPro" id="IPR036028">
    <property type="entry name" value="SH3-like_dom_sf"/>
</dbReference>
<dbReference type="InterPro" id="IPR001452">
    <property type="entry name" value="SH3_domain"/>
</dbReference>
<dbReference type="InterPro" id="IPR055251">
    <property type="entry name" value="SOS1_NGEF_PH"/>
</dbReference>
<dbReference type="PANTHER" id="PTHR12845:SF8">
    <property type="entry name" value="EPHEXIN-1"/>
    <property type="match status" value="1"/>
</dbReference>
<dbReference type="PANTHER" id="PTHR12845">
    <property type="entry name" value="GUANINE NUCLEOTIDE EXCHANGE FACTOR"/>
    <property type="match status" value="1"/>
</dbReference>
<dbReference type="Pfam" id="PF00621">
    <property type="entry name" value="RhoGEF"/>
    <property type="match status" value="1"/>
</dbReference>
<dbReference type="Pfam" id="PF00018">
    <property type="entry name" value="SH3_1"/>
    <property type="match status" value="1"/>
</dbReference>
<dbReference type="Pfam" id="PF22697">
    <property type="entry name" value="SOS1_NGEF_PH"/>
    <property type="match status" value="1"/>
</dbReference>
<dbReference type="SMART" id="SM00233">
    <property type="entry name" value="PH"/>
    <property type="match status" value="1"/>
</dbReference>
<dbReference type="SMART" id="SM00325">
    <property type="entry name" value="RhoGEF"/>
    <property type="match status" value="1"/>
</dbReference>
<dbReference type="SMART" id="SM00326">
    <property type="entry name" value="SH3"/>
    <property type="match status" value="1"/>
</dbReference>
<dbReference type="SUPFAM" id="SSF48065">
    <property type="entry name" value="DBL homology domain (DH-domain)"/>
    <property type="match status" value="1"/>
</dbReference>
<dbReference type="SUPFAM" id="SSF50729">
    <property type="entry name" value="PH domain-like"/>
    <property type="match status" value="1"/>
</dbReference>
<dbReference type="SUPFAM" id="SSF50044">
    <property type="entry name" value="SH3-domain"/>
    <property type="match status" value="1"/>
</dbReference>
<dbReference type="PROSITE" id="PS50010">
    <property type="entry name" value="DH_2"/>
    <property type="match status" value="1"/>
</dbReference>
<dbReference type="PROSITE" id="PS50003">
    <property type="entry name" value="PH_DOMAIN"/>
    <property type="match status" value="1"/>
</dbReference>
<dbReference type="PROSITE" id="PS50002">
    <property type="entry name" value="SH3"/>
    <property type="match status" value="1"/>
</dbReference>
<reference key="1">
    <citation type="journal article" date="2004" name="Nature">
        <title>Genome sequence of the Brown Norway rat yields insights into mammalian evolution.</title>
        <authorList>
            <person name="Gibbs R.A."/>
            <person name="Weinstock G.M."/>
            <person name="Metzker M.L."/>
            <person name="Muzny D.M."/>
            <person name="Sodergren E.J."/>
            <person name="Scherer S."/>
            <person name="Scott G."/>
            <person name="Steffen D."/>
            <person name="Worley K.C."/>
            <person name="Burch P.E."/>
            <person name="Okwuonu G."/>
            <person name="Hines S."/>
            <person name="Lewis L."/>
            <person name="Deramo C."/>
            <person name="Delgado O."/>
            <person name="Dugan-Rocha S."/>
            <person name="Miner G."/>
            <person name="Morgan M."/>
            <person name="Hawes A."/>
            <person name="Gill R."/>
            <person name="Holt R.A."/>
            <person name="Adams M.D."/>
            <person name="Amanatides P.G."/>
            <person name="Baden-Tillson H."/>
            <person name="Barnstead M."/>
            <person name="Chin S."/>
            <person name="Evans C.A."/>
            <person name="Ferriera S."/>
            <person name="Fosler C."/>
            <person name="Glodek A."/>
            <person name="Gu Z."/>
            <person name="Jennings D."/>
            <person name="Kraft C.L."/>
            <person name="Nguyen T."/>
            <person name="Pfannkoch C.M."/>
            <person name="Sitter C."/>
            <person name="Sutton G.G."/>
            <person name="Venter J.C."/>
            <person name="Woodage T."/>
            <person name="Smith D."/>
            <person name="Lee H.-M."/>
            <person name="Gustafson E."/>
            <person name="Cahill P."/>
            <person name="Kana A."/>
            <person name="Doucette-Stamm L."/>
            <person name="Weinstock K."/>
            <person name="Fechtel K."/>
            <person name="Weiss R.B."/>
            <person name="Dunn D.M."/>
            <person name="Green E.D."/>
            <person name="Blakesley R.W."/>
            <person name="Bouffard G.G."/>
            <person name="De Jong P.J."/>
            <person name="Osoegawa K."/>
            <person name="Zhu B."/>
            <person name="Marra M."/>
            <person name="Schein J."/>
            <person name="Bosdet I."/>
            <person name="Fjell C."/>
            <person name="Jones S."/>
            <person name="Krzywinski M."/>
            <person name="Mathewson C."/>
            <person name="Siddiqui A."/>
            <person name="Wye N."/>
            <person name="McPherson J."/>
            <person name="Zhao S."/>
            <person name="Fraser C.M."/>
            <person name="Shetty J."/>
            <person name="Shatsman S."/>
            <person name="Geer K."/>
            <person name="Chen Y."/>
            <person name="Abramzon S."/>
            <person name="Nierman W.C."/>
            <person name="Havlak P.H."/>
            <person name="Chen R."/>
            <person name="Durbin K.J."/>
            <person name="Egan A."/>
            <person name="Ren Y."/>
            <person name="Song X.-Z."/>
            <person name="Li B."/>
            <person name="Liu Y."/>
            <person name="Qin X."/>
            <person name="Cawley S."/>
            <person name="Cooney A.J."/>
            <person name="D'Souza L.M."/>
            <person name="Martin K."/>
            <person name="Wu J.Q."/>
            <person name="Gonzalez-Garay M.L."/>
            <person name="Jackson A.R."/>
            <person name="Kalafus K.J."/>
            <person name="McLeod M.P."/>
            <person name="Milosavljevic A."/>
            <person name="Virk D."/>
            <person name="Volkov A."/>
            <person name="Wheeler D.A."/>
            <person name="Zhang Z."/>
            <person name="Bailey J.A."/>
            <person name="Eichler E.E."/>
            <person name="Tuzun E."/>
            <person name="Birney E."/>
            <person name="Mongin E."/>
            <person name="Ureta-Vidal A."/>
            <person name="Woodwark C."/>
            <person name="Zdobnov E."/>
            <person name="Bork P."/>
            <person name="Suyama M."/>
            <person name="Torrents D."/>
            <person name="Alexandersson M."/>
            <person name="Trask B.J."/>
            <person name="Young J.M."/>
            <person name="Huang H."/>
            <person name="Wang H."/>
            <person name="Xing H."/>
            <person name="Daniels S."/>
            <person name="Gietzen D."/>
            <person name="Schmidt J."/>
            <person name="Stevens K."/>
            <person name="Vitt U."/>
            <person name="Wingrove J."/>
            <person name="Camara F."/>
            <person name="Mar Alba M."/>
            <person name="Abril J.F."/>
            <person name="Guigo R."/>
            <person name="Smit A."/>
            <person name="Dubchak I."/>
            <person name="Rubin E.M."/>
            <person name="Couronne O."/>
            <person name="Poliakov A."/>
            <person name="Huebner N."/>
            <person name="Ganten D."/>
            <person name="Goesele C."/>
            <person name="Hummel O."/>
            <person name="Kreitler T."/>
            <person name="Lee Y.-A."/>
            <person name="Monti J."/>
            <person name="Schulz H."/>
            <person name="Zimdahl H."/>
            <person name="Himmelbauer H."/>
            <person name="Lehrach H."/>
            <person name="Jacob H.J."/>
            <person name="Bromberg S."/>
            <person name="Gullings-Handley J."/>
            <person name="Jensen-Seaman M.I."/>
            <person name="Kwitek A.E."/>
            <person name="Lazar J."/>
            <person name="Pasko D."/>
            <person name="Tonellato P.J."/>
            <person name="Twigger S."/>
            <person name="Ponting C.P."/>
            <person name="Duarte J.M."/>
            <person name="Rice S."/>
            <person name="Goodstadt L."/>
            <person name="Beatson S.A."/>
            <person name="Emes R.D."/>
            <person name="Winter E.E."/>
            <person name="Webber C."/>
            <person name="Brandt P."/>
            <person name="Nyakatura G."/>
            <person name="Adetobi M."/>
            <person name="Chiaromonte F."/>
            <person name="Elnitski L."/>
            <person name="Eswara P."/>
            <person name="Hardison R.C."/>
            <person name="Hou M."/>
            <person name="Kolbe D."/>
            <person name="Makova K."/>
            <person name="Miller W."/>
            <person name="Nekrutenko A."/>
            <person name="Riemer C."/>
            <person name="Schwartz S."/>
            <person name="Taylor J."/>
            <person name="Yang S."/>
            <person name="Zhang Y."/>
            <person name="Lindpaintner K."/>
            <person name="Andrews T.D."/>
            <person name="Caccamo M."/>
            <person name="Clamp M."/>
            <person name="Clarke L."/>
            <person name="Curwen V."/>
            <person name="Durbin R.M."/>
            <person name="Eyras E."/>
            <person name="Searle S.M."/>
            <person name="Cooper G.M."/>
            <person name="Batzoglou S."/>
            <person name="Brudno M."/>
            <person name="Sidow A."/>
            <person name="Stone E.A."/>
            <person name="Payseur B.A."/>
            <person name="Bourque G."/>
            <person name="Lopez-Otin C."/>
            <person name="Puente X.S."/>
            <person name="Chakrabarti K."/>
            <person name="Chatterji S."/>
            <person name="Dewey C."/>
            <person name="Pachter L."/>
            <person name="Bray N."/>
            <person name="Yap V.B."/>
            <person name="Caspi A."/>
            <person name="Tesler G."/>
            <person name="Pevzner P.A."/>
            <person name="Haussler D."/>
            <person name="Roskin K.M."/>
            <person name="Baertsch R."/>
            <person name="Clawson H."/>
            <person name="Furey T.S."/>
            <person name="Hinrichs A.S."/>
            <person name="Karolchik D."/>
            <person name="Kent W.J."/>
            <person name="Rosenbloom K.R."/>
            <person name="Trumbower H."/>
            <person name="Weirauch M."/>
            <person name="Cooper D.N."/>
            <person name="Stenson P.D."/>
            <person name="Ma B."/>
            <person name="Brent M."/>
            <person name="Arumugam M."/>
            <person name="Shteynberg D."/>
            <person name="Copley R.R."/>
            <person name="Taylor M.S."/>
            <person name="Riethman H."/>
            <person name="Mudunuri U."/>
            <person name="Peterson J."/>
            <person name="Guyer M."/>
            <person name="Felsenfeld A."/>
            <person name="Old S."/>
            <person name="Mockrin S."/>
            <person name="Collins F.S."/>
        </authorList>
    </citation>
    <scope>NUCLEOTIDE SEQUENCE [LARGE SCALE GENOMIC DNA]</scope>
    <source>
        <strain>Brown Norway</strain>
    </source>
</reference>
<reference key="2">
    <citation type="journal article" date="2004" name="Genome Res.">
        <title>The status, quality, and expansion of the NIH full-length cDNA project: the Mammalian Gene Collection (MGC).</title>
        <authorList>
            <consortium name="The MGC Project Team"/>
        </authorList>
    </citation>
    <scope>NUCLEOTIDE SEQUENCE [LARGE SCALE MRNA] OF 341-701</scope>
    <source>
        <tissue>Brain</tissue>
    </source>
</reference>
<reference key="3">
    <citation type="journal article" date="2001" name="Cell">
        <title>EphA receptors regulate growth cone dynamics through the novel guanine nucleotide exchange factor ephexin.</title>
        <authorList>
            <person name="Shamah S.M."/>
            <person name="Lin M.Z."/>
            <person name="Goldberg J.L."/>
            <person name="Estrach S."/>
            <person name="Sahin M."/>
            <person name="Hu L."/>
            <person name="Bazalakova M."/>
            <person name="Neve R.L."/>
            <person name="Corfas G."/>
            <person name="Debant A."/>
            <person name="Greenberg M.E."/>
        </authorList>
    </citation>
    <scope>FUNCTION</scope>
    <scope>TISSUE SPECIFICITY</scope>
    <scope>SUBCELLULAR LOCATION</scope>
    <scope>DEVELOPMENTAL STAGE</scope>
    <scope>INTERACTION WITH EPHA4</scope>
</reference>
<reference key="4">
    <citation type="journal article" date="2005" name="Neuron">
        <title>Eph-dependent tyrosine phosphorylation of ephexin1 modulates growth cone collapse.</title>
        <authorList>
            <person name="Sahin M."/>
            <person name="Greer P.L."/>
            <person name="Lin M.Z."/>
            <person name="Poucher H."/>
            <person name="Eberhart J."/>
            <person name="Schmidt S."/>
            <person name="Wright T.M."/>
            <person name="Shamah S.M."/>
            <person name="O'connell S."/>
            <person name="Cowan C.W."/>
            <person name="Hu L."/>
            <person name="Goldberg J.L."/>
            <person name="Debant A."/>
            <person name="Corfas G."/>
            <person name="Krull C.E."/>
            <person name="Greenberg M.E."/>
        </authorList>
    </citation>
    <scope>PHOSPHORYLATION AT TYR-172 BY SRC FAMILY KINASES</scope>
</reference>
<keyword id="KW-0966">Cell projection</keyword>
<keyword id="KW-0963">Cytoplasm</keyword>
<keyword id="KW-0217">Developmental protein</keyword>
<keyword id="KW-0221">Differentiation</keyword>
<keyword id="KW-0344">Guanine-nucleotide releasing factor</keyword>
<keyword id="KW-0472">Membrane</keyword>
<keyword id="KW-0524">Neurogenesis</keyword>
<keyword id="KW-0597">Phosphoprotein</keyword>
<keyword id="KW-1185">Reference proteome</keyword>
<keyword id="KW-0728">SH3 domain</keyword>
<name>NGEF_RAT</name>
<sequence length="701" mass="81008">METKNSEDQGKPQRKSVSSLWKSKHGPAEMRPELPPETAKETQNEEPRCLIPIQRNSLFNRAMRHKHKARSMSERRANDQAGDLPETRKSVNEPLAFNLPQGRLPPWRTPAQRGPGAQEASESSSTPGNGTTPEECPALTDSPTTLTEALQMIHPIPADSWRNLIEQIGLLYQEYRDKSTLQEIETRRQQDAEIQGNSDGSQAGEDNAEEEEEEEEEPASPPERRALPQICLLSNPHSRFNLWQDLPEIQSSGVLDILQPEETKLQEAMFELVTSEASYYKSLNLLVSHFMENERLKKILHPSEAHILFSNVLDVMAVSERFLLELEHRMEENIVISDVCDIVYRYAADHFSVYITYVSNQTYQERTYKQLLQEKTAFRELIAQLELDPKCKGLPLSSFLILPFQRITRLKLLVQNILKRVEEGSEREGTALDAHKELEMVVKACNEGVRKMSRTEQMISIQKKMEFKIKSVPIISHSRWLLKQGELQQMSGPKTSRTLRTKKLFREIYLFLFNDLLVICRQIPGDKYQVFDSAPRGLLRVEELEDQGQTLANVFILRLLENADDREATYMLKASSQSEMKRWMTSLAPNRRTKFVSFTSRLLDCPQVQCVHPYVAQQPDELTLELADILNILEKTEDGWIFGERLHDQERGWFPSSMTEEILNPKIRSQNLKECFRVHKMEDPQRSQNKDRRKLGSRNRQ</sequence>
<protein>
    <recommendedName>
        <fullName>Ephexin-1</fullName>
    </recommendedName>
    <alternativeName>
        <fullName>Eph-interacting exchange protein</fullName>
    </alternativeName>
    <alternativeName>
        <fullName>Neuronal guanine nucleotide exchange factor</fullName>
    </alternativeName>
</protein>
<organism>
    <name type="scientific">Rattus norvegicus</name>
    <name type="common">Rat</name>
    <dbReference type="NCBI Taxonomy" id="10116"/>
    <lineage>
        <taxon>Eukaryota</taxon>
        <taxon>Metazoa</taxon>
        <taxon>Chordata</taxon>
        <taxon>Craniata</taxon>
        <taxon>Vertebrata</taxon>
        <taxon>Euteleostomi</taxon>
        <taxon>Mammalia</taxon>
        <taxon>Eutheria</taxon>
        <taxon>Euarchontoglires</taxon>
        <taxon>Glires</taxon>
        <taxon>Rodentia</taxon>
        <taxon>Myomorpha</taxon>
        <taxon>Muroidea</taxon>
        <taxon>Muridae</taxon>
        <taxon>Murinae</taxon>
        <taxon>Rattus</taxon>
    </lineage>
</organism>
<comment type="function">
    <text evidence="6">Acts as a guanine nucleotide exchange factor (GEF) which differentially activates the GTPases RHOA, RAC1 and CDC42. Plays a role in axon guidance regulating ephrin-induced growth cone collapse and dendritic spine morphogenesis. Upon activation by ephrin through EPHA4, the GEF activity switches toward RHOA resulting in its activation. Activated RHOA promotes cone retraction at the expense of RAC1- and CDC42-stimulated growth cone extension.</text>
</comment>
<comment type="subunit">
    <text evidence="6">Interacts with CDK5R1 and EPHA4; activated by EPHA4 through the CDK5 kinase.</text>
</comment>
<comment type="subcellular location">
    <subcellularLocation>
        <location evidence="6">Cytoplasm</location>
    </subcellularLocation>
    <subcellularLocation>
        <location evidence="6">Membrane</location>
    </subcellularLocation>
    <subcellularLocation>
        <location evidence="6">Cell projection</location>
        <location evidence="6">Growth cone</location>
    </subcellularLocation>
    <text>Associated with membranes. Localizes to axonal growth cones.</text>
</comment>
<comment type="tissue specificity">
    <text evidence="6">Expressed in telencephalic neurons (at protein level). Expressed in brain, spinal cord and testis.</text>
</comment>
<comment type="developmental stage">
    <text evidence="6">First detected at 15 dpc. Expression increases gradually throughout embryonic development and peaks at postnatal day 10. Expressed at 17 dpc in the eye and the deep layers of the cortex. At postnatal day 6, expression is restricted to retinal glanglion cell layer in the eye.</text>
</comment>
<comment type="domain">
    <text evidence="1">The DH domain and the PH domain are both required to mediate interaction with EPHA4.</text>
</comment>
<comment type="PTM">
    <text evidence="7">Phosphorylation by CDK5 upon EPHA4 activation by EFNA1 may regulate dendritic spine morphogenesis. Src-dependent phosphorylation at Tyr-172 upon EPHA4 activation increases the guanine exchange factor activity toward RHOA.</text>
</comment>
<accession>Q5BKC9</accession>
<proteinExistence type="evidence at protein level"/>
<gene>
    <name type="primary">Ngef</name>
</gene>